<dbReference type="EMBL" id="S79711">
    <property type="protein sequence ID" value="AAB21286.2"/>
    <property type="molecule type" value="mRNA"/>
</dbReference>
<dbReference type="RefSeq" id="NP_001071114.1">
    <property type="nucleotide sequence ID" value="NM_001077646.2"/>
</dbReference>
<dbReference type="SMR" id="Q64159"/>
<dbReference type="FunCoup" id="Q64159">
    <property type="interactions" value="176"/>
</dbReference>
<dbReference type="STRING" id="10116.ENSRNOP00000021390"/>
<dbReference type="GlyCosmos" id="Q64159">
    <property type="glycosylation" value="1 site, No reported glycans"/>
</dbReference>
<dbReference type="GlyGen" id="Q64159">
    <property type="glycosylation" value="1 site"/>
</dbReference>
<dbReference type="PhosphoSitePlus" id="Q64159"/>
<dbReference type="PaxDb" id="10116-ENSRNOP00000021390"/>
<dbReference type="GeneID" id="300678"/>
<dbReference type="KEGG" id="rno:300678"/>
<dbReference type="UCSC" id="RGD:1307718">
    <property type="organism name" value="rat"/>
</dbReference>
<dbReference type="AGR" id="RGD:1307718"/>
<dbReference type="CTD" id="917"/>
<dbReference type="RGD" id="1307718">
    <property type="gene designation" value="Cd3g"/>
</dbReference>
<dbReference type="eggNOG" id="ENOG502S4XC">
    <property type="taxonomic scope" value="Eukaryota"/>
</dbReference>
<dbReference type="InParanoid" id="Q64159"/>
<dbReference type="OrthoDB" id="81830at9989"/>
<dbReference type="PhylomeDB" id="Q64159"/>
<dbReference type="Reactome" id="R-RNO-198933">
    <property type="pathway name" value="Immunoregulatory interactions between a Lymphoid and a non-Lymphoid cell"/>
</dbReference>
<dbReference type="Reactome" id="R-RNO-202424">
    <property type="pathway name" value="Downstream TCR signaling"/>
</dbReference>
<dbReference type="Reactome" id="R-RNO-202427">
    <property type="pathway name" value="Phosphorylation of CD3 and TCR zeta chains"/>
</dbReference>
<dbReference type="Reactome" id="R-RNO-202430">
    <property type="pathway name" value="Translocation of ZAP-70 to Immunological synapse"/>
</dbReference>
<dbReference type="Reactome" id="R-RNO-202433">
    <property type="pathway name" value="Generation of second messenger molecules"/>
</dbReference>
<dbReference type="Reactome" id="R-RNO-2029481">
    <property type="pathway name" value="FCGR activation"/>
</dbReference>
<dbReference type="Reactome" id="R-RNO-2029482">
    <property type="pathway name" value="Regulation of actin dynamics for phagocytic cup formation"/>
</dbReference>
<dbReference type="Reactome" id="R-RNO-2029485">
    <property type="pathway name" value="Role of phospholipids in phagocytosis"/>
</dbReference>
<dbReference type="Reactome" id="R-RNO-389948">
    <property type="pathway name" value="Co-inhibition by PD-1"/>
</dbReference>
<dbReference type="Reactome" id="R-RNO-8856825">
    <property type="pathway name" value="Cargo recognition for clathrin-mediated endocytosis"/>
</dbReference>
<dbReference type="Reactome" id="R-RNO-8856828">
    <property type="pathway name" value="Clathrin-mediated endocytosis"/>
</dbReference>
<dbReference type="PRO" id="PR:Q64159"/>
<dbReference type="Proteomes" id="UP000002494">
    <property type="component" value="Unplaced"/>
</dbReference>
<dbReference type="GO" id="GO:0042105">
    <property type="term" value="C:alpha-beta T cell receptor complex"/>
    <property type="evidence" value="ECO:0000266"/>
    <property type="project" value="RGD"/>
</dbReference>
<dbReference type="GO" id="GO:0009897">
    <property type="term" value="C:external side of plasma membrane"/>
    <property type="evidence" value="ECO:0000318"/>
    <property type="project" value="GO_Central"/>
</dbReference>
<dbReference type="GO" id="GO:0042802">
    <property type="term" value="F:identical protein binding"/>
    <property type="evidence" value="ECO:0000266"/>
    <property type="project" value="RGD"/>
</dbReference>
<dbReference type="GO" id="GO:0004888">
    <property type="term" value="F:transmembrane signaling receptor activity"/>
    <property type="evidence" value="ECO:0000250"/>
    <property type="project" value="UniProtKB"/>
</dbReference>
<dbReference type="GO" id="GO:0002250">
    <property type="term" value="P:adaptive immune response"/>
    <property type="evidence" value="ECO:0007669"/>
    <property type="project" value="UniProtKB-KW"/>
</dbReference>
<dbReference type="GO" id="GO:0007166">
    <property type="term" value="P:cell surface receptor signaling pathway"/>
    <property type="evidence" value="ECO:0000250"/>
    <property type="project" value="UniProtKB"/>
</dbReference>
<dbReference type="GO" id="GO:0007163">
    <property type="term" value="P:establishment or maintenance of cell polarity"/>
    <property type="evidence" value="ECO:0000250"/>
    <property type="project" value="UniProtKB"/>
</dbReference>
<dbReference type="GO" id="GO:0045059">
    <property type="term" value="P:positive thymic T cell selection"/>
    <property type="evidence" value="ECO:0000318"/>
    <property type="project" value="GO_Central"/>
</dbReference>
<dbReference type="GO" id="GO:0015031">
    <property type="term" value="P:protein transport"/>
    <property type="evidence" value="ECO:0000250"/>
    <property type="project" value="UniProtKB"/>
</dbReference>
<dbReference type="GO" id="GO:0070228">
    <property type="term" value="P:regulation of lymphocyte apoptotic process"/>
    <property type="evidence" value="ECO:0000250"/>
    <property type="project" value="UniProtKB"/>
</dbReference>
<dbReference type="FunFam" id="2.60.40.10:FF:001337">
    <property type="entry name" value="T-cell surface glycoprotein CD3 gamma chain"/>
    <property type="match status" value="1"/>
</dbReference>
<dbReference type="Gene3D" id="2.60.40.10">
    <property type="entry name" value="Immunoglobulins"/>
    <property type="match status" value="1"/>
</dbReference>
<dbReference type="InterPro" id="IPR015484">
    <property type="entry name" value="CD3_esu/gsu/dsu"/>
</dbReference>
<dbReference type="InterPro" id="IPR036179">
    <property type="entry name" value="Ig-like_dom_sf"/>
</dbReference>
<dbReference type="InterPro" id="IPR013783">
    <property type="entry name" value="Ig-like_fold"/>
</dbReference>
<dbReference type="InterPro" id="IPR032052">
    <property type="entry name" value="Ig_4"/>
</dbReference>
<dbReference type="InterPro" id="IPR003598">
    <property type="entry name" value="Ig_sub2"/>
</dbReference>
<dbReference type="InterPro" id="IPR003110">
    <property type="entry name" value="Phos_immunorcpt_sig_ITAM"/>
</dbReference>
<dbReference type="PANTHER" id="PTHR10570:SF8">
    <property type="entry name" value="T-CELL SURFACE GLYCOPROTEIN CD3 GAMMA CHAIN"/>
    <property type="match status" value="1"/>
</dbReference>
<dbReference type="PANTHER" id="PTHR10570">
    <property type="entry name" value="T-CELL SURFACE GLYCOPROTEIN CD3 GAMMA CHAIN / DELTA CHAIN"/>
    <property type="match status" value="1"/>
</dbReference>
<dbReference type="Pfam" id="PF16680">
    <property type="entry name" value="Ig_4"/>
    <property type="match status" value="1"/>
</dbReference>
<dbReference type="Pfam" id="PF02189">
    <property type="entry name" value="ITAM"/>
    <property type="match status" value="1"/>
</dbReference>
<dbReference type="SMART" id="SM00408">
    <property type="entry name" value="IGc2"/>
    <property type="match status" value="1"/>
</dbReference>
<dbReference type="SUPFAM" id="SSF48726">
    <property type="entry name" value="Immunoglobulin"/>
    <property type="match status" value="1"/>
</dbReference>
<dbReference type="PROSITE" id="PS51055">
    <property type="entry name" value="ITAM_1"/>
    <property type="match status" value="1"/>
</dbReference>
<protein>
    <recommendedName>
        <fullName>T-cell surface glycoprotein CD3 gamma chain</fullName>
    </recommendedName>
    <alternativeName>
        <fullName>T-cell receptor T3 gamma chain</fullName>
    </alternativeName>
    <cdAntigenName>CD3g</cdAntigenName>
</protein>
<proteinExistence type="evidence at transcript level"/>
<sequence>MEQGKGLAGLFLVISLLQGTMAQQKEEKHLVKVDDSQGDGSVLLTCDFNEKTITWLKDGHRISPPNATKSTWNLGNGAKDPRGMYQCRGAKKKSQLLQVYYRLCENCIELNMGTVSGFIFAEIISIFFLAVGVYFIAGQDGVRQSRASDKQTLLQNEQVYQPLKDREYEQYSRLQGNQVRKK</sequence>
<gene>
    <name type="primary">Cd3g</name>
</gene>
<name>CD3G_RAT</name>
<reference key="1">
    <citation type="journal article" date="1992" name="Immunogenetics">
        <title>The CD3 gamma-chain, transmembrane signalling or recognition?</title>
        <authorList>
            <person name="Levins B."/>
            <person name="Colaco C.A."/>
        </authorList>
    </citation>
    <scope>NUCLEOTIDE SEQUENCE [MRNA]</scope>
</reference>
<organism>
    <name type="scientific">Rattus norvegicus</name>
    <name type="common">Rat</name>
    <dbReference type="NCBI Taxonomy" id="10116"/>
    <lineage>
        <taxon>Eukaryota</taxon>
        <taxon>Metazoa</taxon>
        <taxon>Chordata</taxon>
        <taxon>Craniata</taxon>
        <taxon>Vertebrata</taxon>
        <taxon>Euteleostomi</taxon>
        <taxon>Mammalia</taxon>
        <taxon>Eutheria</taxon>
        <taxon>Euarchontoglires</taxon>
        <taxon>Glires</taxon>
        <taxon>Rodentia</taxon>
        <taxon>Myomorpha</taxon>
        <taxon>Muroidea</taxon>
        <taxon>Muridae</taxon>
        <taxon>Murinae</taxon>
        <taxon>Rattus</taxon>
    </lineage>
</organism>
<feature type="signal peptide" evidence="1">
    <location>
        <begin position="1"/>
        <end position="22"/>
    </location>
</feature>
<feature type="chain" id="PRO_0000014618" description="T-cell surface glycoprotein CD3 gamma chain">
    <location>
        <begin position="23"/>
        <end position="182"/>
    </location>
</feature>
<feature type="topological domain" description="Extracellular" evidence="4">
    <location>
        <begin position="23"/>
        <end position="116"/>
    </location>
</feature>
<feature type="transmembrane region" description="Helical" evidence="4">
    <location>
        <begin position="117"/>
        <end position="137"/>
    </location>
</feature>
<feature type="topological domain" description="Cytoplasmic" evidence="4">
    <location>
        <begin position="138"/>
        <end position="182"/>
    </location>
</feature>
<feature type="domain" description="Ig-like">
    <location>
        <begin position="37"/>
        <end position="94"/>
    </location>
</feature>
<feature type="domain" description="ITAM" evidence="5">
    <location>
        <begin position="149"/>
        <end position="177"/>
    </location>
</feature>
<feature type="short sequence motif" description="Di-leucine motif" evidence="3">
    <location>
        <begin position="153"/>
        <end position="154"/>
    </location>
</feature>
<feature type="modified residue" description="Phosphoserine" evidence="3">
    <location>
        <position position="145"/>
    </location>
</feature>
<feature type="modified residue" description="Phosphoserine; by PKC" evidence="3">
    <location>
        <position position="148"/>
    </location>
</feature>
<feature type="glycosylation site" description="N-linked (GlcNAc...) asparagine" evidence="4">
    <location>
        <position position="66"/>
    </location>
</feature>
<feature type="disulfide bond" evidence="3">
    <location>
        <begin position="46"/>
        <end position="87"/>
    </location>
</feature>
<evidence type="ECO:0000250" key="1"/>
<evidence type="ECO:0000250" key="2">
    <source>
        <dbReference type="UniProtKB" id="P04234"/>
    </source>
</evidence>
<evidence type="ECO:0000250" key="3">
    <source>
        <dbReference type="UniProtKB" id="P09693"/>
    </source>
</evidence>
<evidence type="ECO:0000255" key="4"/>
<evidence type="ECO:0000255" key="5">
    <source>
        <dbReference type="PROSITE-ProRule" id="PRU00379"/>
    </source>
</evidence>
<accession>Q64159</accession>
<comment type="function">
    <text evidence="3">Part of the TCR-CD3 complex present on T-lymphocyte cell surface that plays an essential role in adaptive immune response. When antigen presenting cells (APCs) activate T-cell receptor (TCR), TCR-mediated signals are transmitted across the cell membrane by the CD3 chains CD3D, CD3E, CD3G and CD3Z. All CD3 chains contain immunoreceptor tyrosine-based activation motifs (ITAMs) in their cytoplasmic domain. Upon TCR engagement, these motifs become phosphorylated by Src family protein tyrosine kinases LCK and FYN, resulting in the activation of downstream signaling pathways. In addition to this role of signal transduction in T-cell activation, CD3G plays an essential role in the dynamic regulation of TCR expression at the cell surface. Indeed, constitutive TCR cycling is dependent on the di-leucine-based (diL) receptor-sorting motif present in CD3G.</text>
</comment>
<comment type="subunit">
    <text evidence="3">The TCR-CD3 complex is composed of a CD3D/CD3E and a CD3G/CD3E heterodimers that preferentially associate with TCRalpha and TCRbeta, respectively, to form TCRalpha/CD3E/CD3G and TCRbeta/CD3G/CD3E trimers. In turn, the hexamer interacts with CD3Z homodimer to form the TCR-CD3 complex. Alternatively, TCRalpha and TCRbeta can be replaced by TCRgamma and TCRdelta.</text>
</comment>
<comment type="subcellular location">
    <subcellularLocation>
        <location evidence="3">Cell membrane</location>
        <topology evidence="3">Single-pass type I membrane protein</topology>
    </subcellularLocation>
</comment>
<comment type="domain">
    <text evidence="3">A di-leucine motif and a tyrosine-based motif are individually sufficient to induce both endocytosis and delivery to lysosomes.</text>
</comment>
<comment type="PTM">
    <text evidence="3">Phosphorylated on Tyr residues after T-cell receptor triggering by LCK in association with CD4/CD8. Phosphorylated also by PKC; leading to the TCR complex down-regulation.</text>
</comment>
<comment type="PTM">
    <text evidence="2">Phosphorylated on Tyr residues after T-cell receptor triggering by LCK in association with CD4/CD8.</text>
</comment>
<keyword id="KW-1064">Adaptive immunity</keyword>
<keyword id="KW-1003">Cell membrane</keyword>
<keyword id="KW-1015">Disulfide bond</keyword>
<keyword id="KW-0325">Glycoprotein</keyword>
<keyword id="KW-0391">Immunity</keyword>
<keyword id="KW-0393">Immunoglobulin domain</keyword>
<keyword id="KW-0472">Membrane</keyword>
<keyword id="KW-0597">Phosphoprotein</keyword>
<keyword id="KW-0675">Receptor</keyword>
<keyword id="KW-1185">Reference proteome</keyword>
<keyword id="KW-0732">Signal</keyword>
<keyword id="KW-0812">Transmembrane</keyword>
<keyword id="KW-1133">Transmembrane helix</keyword>